<feature type="chain" id="PRO_0000235790" description="Ribonuclease HII">
    <location>
        <begin position="1"/>
        <end position="252"/>
    </location>
</feature>
<feature type="domain" description="RNase H type-2" evidence="2">
    <location>
        <begin position="41"/>
        <end position="232"/>
    </location>
</feature>
<feature type="binding site" evidence="1">
    <location>
        <position position="47"/>
    </location>
    <ligand>
        <name>a divalent metal cation</name>
        <dbReference type="ChEBI" id="CHEBI:60240"/>
    </ligand>
</feature>
<feature type="binding site" evidence="1">
    <location>
        <position position="48"/>
    </location>
    <ligand>
        <name>a divalent metal cation</name>
        <dbReference type="ChEBI" id="CHEBI:60240"/>
    </ligand>
</feature>
<feature type="binding site" evidence="1">
    <location>
        <position position="140"/>
    </location>
    <ligand>
        <name>a divalent metal cation</name>
        <dbReference type="ChEBI" id="CHEBI:60240"/>
    </ligand>
</feature>
<name>RNH2_XANOR</name>
<dbReference type="EC" id="3.1.26.4" evidence="1"/>
<dbReference type="EMBL" id="AE013598">
    <property type="protein sequence ID" value="AAW75217.1"/>
    <property type="molecule type" value="Genomic_DNA"/>
</dbReference>
<dbReference type="SMR" id="Q5H1F4"/>
<dbReference type="STRING" id="291331.XOO1963"/>
<dbReference type="KEGG" id="xoo:XOO1963"/>
<dbReference type="HOGENOM" id="CLU_036532_3_2_6"/>
<dbReference type="Proteomes" id="UP000006735">
    <property type="component" value="Chromosome"/>
</dbReference>
<dbReference type="GO" id="GO:0005737">
    <property type="term" value="C:cytoplasm"/>
    <property type="evidence" value="ECO:0007669"/>
    <property type="project" value="UniProtKB-SubCell"/>
</dbReference>
<dbReference type="GO" id="GO:0032299">
    <property type="term" value="C:ribonuclease H2 complex"/>
    <property type="evidence" value="ECO:0007669"/>
    <property type="project" value="TreeGrafter"/>
</dbReference>
<dbReference type="GO" id="GO:0030145">
    <property type="term" value="F:manganese ion binding"/>
    <property type="evidence" value="ECO:0007669"/>
    <property type="project" value="UniProtKB-UniRule"/>
</dbReference>
<dbReference type="GO" id="GO:0003723">
    <property type="term" value="F:RNA binding"/>
    <property type="evidence" value="ECO:0007669"/>
    <property type="project" value="InterPro"/>
</dbReference>
<dbReference type="GO" id="GO:0004523">
    <property type="term" value="F:RNA-DNA hybrid ribonuclease activity"/>
    <property type="evidence" value="ECO:0007669"/>
    <property type="project" value="UniProtKB-UniRule"/>
</dbReference>
<dbReference type="GO" id="GO:0043137">
    <property type="term" value="P:DNA replication, removal of RNA primer"/>
    <property type="evidence" value="ECO:0007669"/>
    <property type="project" value="TreeGrafter"/>
</dbReference>
<dbReference type="GO" id="GO:0006298">
    <property type="term" value="P:mismatch repair"/>
    <property type="evidence" value="ECO:0007669"/>
    <property type="project" value="TreeGrafter"/>
</dbReference>
<dbReference type="CDD" id="cd07182">
    <property type="entry name" value="RNase_HII_bacteria_HII_like"/>
    <property type="match status" value="1"/>
</dbReference>
<dbReference type="FunFam" id="3.30.420.10:FF:000142">
    <property type="entry name" value="Ribonuclease HII"/>
    <property type="match status" value="1"/>
</dbReference>
<dbReference type="Gene3D" id="3.30.420.10">
    <property type="entry name" value="Ribonuclease H-like superfamily/Ribonuclease H"/>
    <property type="match status" value="1"/>
</dbReference>
<dbReference type="HAMAP" id="MF_00052_B">
    <property type="entry name" value="RNase_HII_B"/>
    <property type="match status" value="1"/>
</dbReference>
<dbReference type="InterPro" id="IPR022898">
    <property type="entry name" value="RNase_HII"/>
</dbReference>
<dbReference type="InterPro" id="IPR001352">
    <property type="entry name" value="RNase_HII/HIII"/>
</dbReference>
<dbReference type="InterPro" id="IPR024567">
    <property type="entry name" value="RNase_HII/HIII_dom"/>
</dbReference>
<dbReference type="InterPro" id="IPR012337">
    <property type="entry name" value="RNaseH-like_sf"/>
</dbReference>
<dbReference type="InterPro" id="IPR036397">
    <property type="entry name" value="RNaseH_sf"/>
</dbReference>
<dbReference type="NCBIfam" id="NF000595">
    <property type="entry name" value="PRK00015.1-3"/>
    <property type="match status" value="1"/>
</dbReference>
<dbReference type="PANTHER" id="PTHR10954">
    <property type="entry name" value="RIBONUCLEASE H2 SUBUNIT A"/>
    <property type="match status" value="1"/>
</dbReference>
<dbReference type="PANTHER" id="PTHR10954:SF18">
    <property type="entry name" value="RIBONUCLEASE HII"/>
    <property type="match status" value="1"/>
</dbReference>
<dbReference type="Pfam" id="PF01351">
    <property type="entry name" value="RNase_HII"/>
    <property type="match status" value="1"/>
</dbReference>
<dbReference type="SUPFAM" id="SSF53098">
    <property type="entry name" value="Ribonuclease H-like"/>
    <property type="match status" value="1"/>
</dbReference>
<dbReference type="PROSITE" id="PS51975">
    <property type="entry name" value="RNASE_H_2"/>
    <property type="match status" value="1"/>
</dbReference>
<keyword id="KW-0963">Cytoplasm</keyword>
<keyword id="KW-0255">Endonuclease</keyword>
<keyword id="KW-0378">Hydrolase</keyword>
<keyword id="KW-0464">Manganese</keyword>
<keyword id="KW-0479">Metal-binding</keyword>
<keyword id="KW-0540">Nuclease</keyword>
<keyword id="KW-1185">Reference proteome</keyword>
<gene>
    <name evidence="1" type="primary">rnhB</name>
    <name type="ordered locus">XOO1963</name>
</gene>
<proteinExistence type="inferred from homology"/>
<evidence type="ECO:0000255" key="1">
    <source>
        <dbReference type="HAMAP-Rule" id="MF_00052"/>
    </source>
</evidence>
<evidence type="ECO:0000255" key="2">
    <source>
        <dbReference type="PROSITE-ProRule" id="PRU01319"/>
    </source>
</evidence>
<protein>
    <recommendedName>
        <fullName evidence="1">Ribonuclease HII</fullName>
        <shortName evidence="1">RNase HII</shortName>
        <ecNumber evidence="1">3.1.26.4</ecNumber>
    </recommendedName>
</protein>
<comment type="function">
    <text evidence="1">Endonuclease that specifically degrades the RNA of RNA-DNA hybrids.</text>
</comment>
<comment type="catalytic activity">
    <reaction evidence="1">
        <text>Endonucleolytic cleavage to 5'-phosphomonoester.</text>
        <dbReference type="EC" id="3.1.26.4"/>
    </reaction>
</comment>
<comment type="cofactor">
    <cofactor evidence="1">
        <name>Mn(2+)</name>
        <dbReference type="ChEBI" id="CHEBI:29035"/>
    </cofactor>
    <cofactor evidence="1">
        <name>Mg(2+)</name>
        <dbReference type="ChEBI" id="CHEBI:18420"/>
    </cofactor>
    <text evidence="1">Manganese or magnesium. Binds 1 divalent metal ion per monomer in the absence of substrate. May bind a second metal ion after substrate binding.</text>
</comment>
<comment type="subcellular location">
    <subcellularLocation>
        <location evidence="1">Cytoplasm</location>
    </subcellularLocation>
</comment>
<comment type="similarity">
    <text evidence="1">Belongs to the RNase HII family.</text>
</comment>
<accession>Q5H1F4</accession>
<organism>
    <name type="scientific">Xanthomonas oryzae pv. oryzae (strain KACC10331 / KXO85)</name>
    <dbReference type="NCBI Taxonomy" id="291331"/>
    <lineage>
        <taxon>Bacteria</taxon>
        <taxon>Pseudomonadati</taxon>
        <taxon>Pseudomonadota</taxon>
        <taxon>Gammaproteobacteria</taxon>
        <taxon>Lysobacterales</taxon>
        <taxon>Lysobacteraceae</taxon>
        <taxon>Xanthomonas</taxon>
    </lineage>
</organism>
<sequence length="252" mass="27362">MVRSKHMKILAANAQADSSNTEARQSLLFSQSPIPNAESRLLVAGVDEAGRGPLAGPVAVAAVVFDPNKPRINGLDDSKQLTAERREQLYARIVDRALSWSVVLIDSEEIDRINIYQATMLGMRRAVEGVAHVAGFARIDGNRVPKGLPCPAEALIGGDALDRAIMAASIVAKVTRDRLMHELHAQHPEYRFDQHKGYSTPMHLAALQTHGPCPQHRRSFAPVRLALEGREQGSAAIGDPEQLQVAQLVAPL</sequence>
<reference key="1">
    <citation type="journal article" date="2005" name="Nucleic Acids Res.">
        <title>The genome sequence of Xanthomonas oryzae pathovar oryzae KACC10331, the bacterial blight pathogen of rice.</title>
        <authorList>
            <person name="Lee B.-M."/>
            <person name="Park Y.-J."/>
            <person name="Park D.-S."/>
            <person name="Kang H.-W."/>
            <person name="Kim J.-G."/>
            <person name="Song E.-S."/>
            <person name="Park I.-C."/>
            <person name="Yoon U.-H."/>
            <person name="Hahn J.-H."/>
            <person name="Koo B.-S."/>
            <person name="Lee G.-B."/>
            <person name="Kim H."/>
            <person name="Park H.-S."/>
            <person name="Yoon K.-O."/>
            <person name="Kim J.-H."/>
            <person name="Jung C.-H."/>
            <person name="Koh N.-H."/>
            <person name="Seo J.-S."/>
            <person name="Go S.-J."/>
        </authorList>
    </citation>
    <scope>NUCLEOTIDE SEQUENCE [LARGE SCALE GENOMIC DNA]</scope>
    <source>
        <strain>KACC10331 / KXO85</strain>
    </source>
</reference>